<gene>
    <name evidence="4" type="primary">tazP</name>
    <name type="ORF">ATEG_03441</name>
</gene>
<comment type="function">
    <text evidence="3 6">FAD-dependent monooxygenase; part of the gene cluster that mediates the biosynthesis of azaterrilone A and other azaphilones, a class of fungal metabolites characterized by a highly oxygenated pyrano-quinone bicyclic core and exhibiting a broad range of bioactivities (PubMed:35398258). The first step of the pathway begins with the non-reducing polyketide synthase tazA that assembles one acetyl-CoA starter unit, five malonyl-CoA units, and catalyzes a series of Claisen condensations, methylation, PT-mediated cyclization, and finally releases the first hexaketide precursor through the R-domain. The tazA product then undergoes reduction on its terminal ketone and the following pyran-ring formation by yet undetermined enzyme(s). Dehydration and enoyl reduction, possibly involving the trans-enoyl reductase tazE leads to the next intermediate. TazD is predicted as an acetyltransferase and might catalyze the acetylation steps leading to the synthesis of azaterrilone A. Azaterrilone A is not the final product of the taz pathway and both the highly reducing polyketide synthase tazB and the dual enzyme tazHJ catalyze late steps of the pathway, leading to the production of the 2 final stereoisomers that contain additional polyketide modification whose structures have still to be determined (Probable).</text>
</comment>
<comment type="cofactor">
    <cofactor evidence="1">
        <name>FAD</name>
        <dbReference type="ChEBI" id="CHEBI:57692"/>
    </cofactor>
</comment>
<comment type="pathway">
    <text evidence="6">Secondary metabolite biosynthesis.</text>
</comment>
<comment type="induction">
    <text evidence="3">Expression is positively regulated by the azaterrilone A cluster-specific transcription factor tazR.</text>
</comment>
<comment type="similarity">
    <text evidence="5">Belongs to the paxM FAD-dependent monooxygenase family.</text>
</comment>
<dbReference type="EC" id="1.-.-.-" evidence="6"/>
<dbReference type="EMBL" id="CH476597">
    <property type="protein sequence ID" value="EAU36715.1"/>
    <property type="molecule type" value="Genomic_DNA"/>
</dbReference>
<dbReference type="SMR" id="Q0CS93"/>
<dbReference type="STRING" id="341663.Q0CS93"/>
<dbReference type="EnsemblFungi" id="EAU36715">
    <property type="protein sequence ID" value="EAU36715"/>
    <property type="gene ID" value="ATEG_03441"/>
</dbReference>
<dbReference type="VEuPathDB" id="FungiDB:ATEG_03441"/>
<dbReference type="eggNOG" id="KOG2614">
    <property type="taxonomic scope" value="Eukaryota"/>
</dbReference>
<dbReference type="HOGENOM" id="CLU_009665_3_2_1"/>
<dbReference type="OMA" id="SLTIHWA"/>
<dbReference type="OrthoDB" id="47494at2759"/>
<dbReference type="Proteomes" id="UP000007963">
    <property type="component" value="Unassembled WGS sequence"/>
</dbReference>
<dbReference type="GO" id="GO:0004497">
    <property type="term" value="F:monooxygenase activity"/>
    <property type="evidence" value="ECO:0007669"/>
    <property type="project" value="UniProtKB-KW"/>
</dbReference>
<dbReference type="Gene3D" id="3.50.50.60">
    <property type="entry name" value="FAD/NAD(P)-binding domain"/>
    <property type="match status" value="1"/>
</dbReference>
<dbReference type="InterPro" id="IPR036188">
    <property type="entry name" value="FAD/NAD-bd_sf"/>
</dbReference>
<dbReference type="PANTHER" id="PTHR47178:SF1">
    <property type="entry name" value="FAD-BINDING DOMAIN-CONTAINING PROTEIN-RELATED"/>
    <property type="match status" value="1"/>
</dbReference>
<dbReference type="PANTHER" id="PTHR47178">
    <property type="entry name" value="MONOOXYGENASE, FAD-BINDING"/>
    <property type="match status" value="1"/>
</dbReference>
<dbReference type="PRINTS" id="PR00420">
    <property type="entry name" value="RNGMNOXGNASE"/>
</dbReference>
<dbReference type="SUPFAM" id="SSF51905">
    <property type="entry name" value="FAD/NAD(P)-binding domain"/>
    <property type="match status" value="1"/>
</dbReference>
<evidence type="ECO:0000250" key="1">
    <source>
        <dbReference type="UniProtKB" id="A6T923"/>
    </source>
</evidence>
<evidence type="ECO:0000250" key="2">
    <source>
        <dbReference type="UniProtKB" id="B8M9J8"/>
    </source>
</evidence>
<evidence type="ECO:0000269" key="3">
    <source>
    </source>
</evidence>
<evidence type="ECO:0000303" key="4">
    <source>
    </source>
</evidence>
<evidence type="ECO:0000305" key="5"/>
<evidence type="ECO:0000305" key="6">
    <source>
    </source>
</evidence>
<sequence>MSILKLVKGVLYGEGEHHEKPKKTHIVIIGAGLTGLLLAQGLRKLNARLEAEGQSAPFTFSIHERDESSFYRGGGFSLTIHWALQQLYDILPEELSARIFECVGNPDAIKNGQMGSFTFLNLRTGEPALKTTIPPGWKGARMSRVRFLQLLMTDLDIHYSHRLSQITFPTDNTVRAHFENGDQETGNLLIGADGANSVVRRFVYGAENSKNTQLPIRMLNCRSEYPLEELEACLRVDPHLFHAGDPVQDGYFMFAFLDMPPAGSKNGKAGVQLTISWPYESGYLGQEAPSDPPTELPEQLAWLKHMAKHWANPVHDLIYGMPDDSIVRVIRVQEWMPNDANRRPTDGRITTVGDAAHLMTSFRGENANHGVVDVAKLLALLAPSGNKPTDLREVPVPVSTDDA</sequence>
<proteinExistence type="evidence at transcript level"/>
<accession>Q0CS93</accession>
<reference key="1">
    <citation type="submission" date="2005-09" db="EMBL/GenBank/DDBJ databases">
        <title>Annotation of the Aspergillus terreus NIH2624 genome.</title>
        <authorList>
            <person name="Birren B.W."/>
            <person name="Lander E.S."/>
            <person name="Galagan J.E."/>
            <person name="Nusbaum C."/>
            <person name="Devon K."/>
            <person name="Henn M."/>
            <person name="Ma L.-J."/>
            <person name="Jaffe D.B."/>
            <person name="Butler J."/>
            <person name="Alvarez P."/>
            <person name="Gnerre S."/>
            <person name="Grabherr M."/>
            <person name="Kleber M."/>
            <person name="Mauceli E.W."/>
            <person name="Brockman W."/>
            <person name="Rounsley S."/>
            <person name="Young S.K."/>
            <person name="LaButti K."/>
            <person name="Pushparaj V."/>
            <person name="DeCaprio D."/>
            <person name="Crawford M."/>
            <person name="Koehrsen M."/>
            <person name="Engels R."/>
            <person name="Montgomery P."/>
            <person name="Pearson M."/>
            <person name="Howarth C."/>
            <person name="Larson L."/>
            <person name="Luoma S."/>
            <person name="White J."/>
            <person name="Alvarado L."/>
            <person name="Kodira C.D."/>
            <person name="Zeng Q."/>
            <person name="Oleary S."/>
            <person name="Yandava C."/>
            <person name="Denning D.W."/>
            <person name="Nierman W.C."/>
            <person name="Milne T."/>
            <person name="Madden K."/>
        </authorList>
    </citation>
    <scope>NUCLEOTIDE SEQUENCE [LARGE SCALE GENOMIC DNA]</scope>
    <source>
        <strain>NIH 2624 / FGSC A1156</strain>
    </source>
</reference>
<reference key="2">
    <citation type="journal article" date="2022" name="Fungal Genet. Biol.">
        <title>Characterization of a silent azaphilone biosynthesis gene cluster in Aspergillus terreus NIH 2624.</title>
        <authorList>
            <person name="Sun W.W."/>
            <person name="Li C.Y."/>
            <person name="Chiang Y.M."/>
            <person name="Lin T.S."/>
            <person name="Warren S."/>
            <person name="Chang F.R."/>
            <person name="Wang C.C.C."/>
        </authorList>
    </citation>
    <scope>FUNCTION</scope>
    <scope>INDUCTION</scope>
    <scope>PATHWAY</scope>
</reference>
<protein>
    <recommendedName>
        <fullName evidence="4">FAD-dependent monooxygenase tazP</fullName>
        <ecNumber evidence="6">1.-.-.-</ecNumber>
    </recommendedName>
    <alternativeName>
        <fullName evidence="4">Azaphilone biosynthesis cluster protein P</fullName>
    </alternativeName>
</protein>
<name>TAZP_ASPTN</name>
<keyword id="KW-0274">FAD</keyword>
<keyword id="KW-0285">Flavoprotein</keyword>
<keyword id="KW-0503">Monooxygenase</keyword>
<keyword id="KW-0560">Oxidoreductase</keyword>
<keyword id="KW-1185">Reference proteome</keyword>
<feature type="chain" id="PRO_0000456073" description="FAD-dependent monooxygenase tazP">
    <location>
        <begin position="1"/>
        <end position="403"/>
    </location>
</feature>
<feature type="binding site" evidence="2">
    <location>
        <position position="75"/>
    </location>
    <ligand>
        <name>FAD</name>
        <dbReference type="ChEBI" id="CHEBI:57692"/>
    </ligand>
</feature>
<feature type="binding site" evidence="2">
    <location>
        <position position="144"/>
    </location>
    <ligand>
        <name>FAD</name>
        <dbReference type="ChEBI" id="CHEBI:57692"/>
    </ligand>
</feature>
<feature type="binding site" evidence="2">
    <location>
        <position position="354"/>
    </location>
    <ligand>
        <name>FAD</name>
        <dbReference type="ChEBI" id="CHEBI:57692"/>
    </ligand>
</feature>
<feature type="binding site" evidence="2">
    <location>
        <position position="367"/>
    </location>
    <ligand>
        <name>FAD</name>
        <dbReference type="ChEBI" id="CHEBI:57692"/>
    </ligand>
</feature>
<organism>
    <name type="scientific">Aspergillus terreus (strain NIH 2624 / FGSC A1156)</name>
    <dbReference type="NCBI Taxonomy" id="341663"/>
    <lineage>
        <taxon>Eukaryota</taxon>
        <taxon>Fungi</taxon>
        <taxon>Dikarya</taxon>
        <taxon>Ascomycota</taxon>
        <taxon>Pezizomycotina</taxon>
        <taxon>Eurotiomycetes</taxon>
        <taxon>Eurotiomycetidae</taxon>
        <taxon>Eurotiales</taxon>
        <taxon>Aspergillaceae</taxon>
        <taxon>Aspergillus</taxon>
        <taxon>Aspergillus subgen. Circumdati</taxon>
    </lineage>
</organism>